<organism>
    <name type="scientific">Methanocella arvoryzae (strain DSM 22066 / NBRC 105507 / MRE50)</name>
    <dbReference type="NCBI Taxonomy" id="351160"/>
    <lineage>
        <taxon>Archaea</taxon>
        <taxon>Methanobacteriati</taxon>
        <taxon>Methanobacteriota</taxon>
        <taxon>Stenosarchaea group</taxon>
        <taxon>Methanomicrobia</taxon>
        <taxon>Methanocellales</taxon>
        <taxon>Methanocellaceae</taxon>
        <taxon>Methanocella</taxon>
    </lineage>
</organism>
<proteinExistence type="inferred from homology"/>
<protein>
    <recommendedName>
        <fullName evidence="1">DNA-directed RNA polymerase subunit Rpo12</fullName>
        <ecNumber evidence="1">2.7.7.6</ecNumber>
    </recommendedName>
    <alternativeName>
        <fullName evidence="1">DNA-directed RNA polymerase subunit P</fullName>
    </alternativeName>
</protein>
<accession>Q0W2Y5</accession>
<reference key="1">
    <citation type="journal article" date="2006" name="Science">
        <title>Genome of rice cluster I archaea -- the key methane producers in the rice rhizosphere.</title>
        <authorList>
            <person name="Erkel C."/>
            <person name="Kube M."/>
            <person name="Reinhardt R."/>
            <person name="Liesack W."/>
        </authorList>
    </citation>
    <scope>NUCLEOTIDE SEQUENCE [LARGE SCALE GENOMIC DNA]</scope>
    <source>
        <strain>DSM 22066 / NBRC 105507 / MRE50</strain>
    </source>
</reference>
<evidence type="ECO:0000255" key="1">
    <source>
        <dbReference type="HAMAP-Rule" id="MF_00615"/>
    </source>
</evidence>
<feature type="chain" id="PRO_1000061343" description="DNA-directed RNA polymerase subunit Rpo12">
    <location>
        <begin position="1"/>
        <end position="45"/>
    </location>
</feature>
<feature type="binding site" evidence="1">
    <location>
        <position position="8"/>
    </location>
    <ligand>
        <name>Zn(2+)</name>
        <dbReference type="ChEBI" id="CHEBI:29105"/>
    </ligand>
</feature>
<feature type="binding site" evidence="1">
    <location>
        <position position="23"/>
    </location>
    <ligand>
        <name>Zn(2+)</name>
        <dbReference type="ChEBI" id="CHEBI:29105"/>
    </ligand>
</feature>
<feature type="binding site" evidence="1">
    <location>
        <position position="26"/>
    </location>
    <ligand>
        <name>Zn(2+)</name>
        <dbReference type="ChEBI" id="CHEBI:29105"/>
    </ligand>
</feature>
<gene>
    <name evidence="1" type="primary">rpo12</name>
    <name evidence="1" type="synonym">rpoP</name>
    <name type="ordered locus">UNCMA_09900</name>
    <name type="ORF">RCIX2127</name>
</gene>
<name>RPO12_METAR</name>
<sequence>MVYKCAHCKQTVEVDKDMKGVRCQYCGHRILIKERPTAIKRVPAV</sequence>
<dbReference type="EC" id="2.7.7.6" evidence="1"/>
<dbReference type="EMBL" id="AM114193">
    <property type="protein sequence ID" value="CAJ37258.1"/>
    <property type="molecule type" value="Genomic_DNA"/>
</dbReference>
<dbReference type="RefSeq" id="WP_012035318.1">
    <property type="nucleotide sequence ID" value="NC_009464.1"/>
</dbReference>
<dbReference type="SMR" id="Q0W2Y5"/>
<dbReference type="STRING" id="351160.RCIX2127"/>
<dbReference type="GeneID" id="5143250"/>
<dbReference type="KEGG" id="rci:RCIX2127"/>
<dbReference type="eggNOG" id="arCOG04341">
    <property type="taxonomic scope" value="Archaea"/>
</dbReference>
<dbReference type="OrthoDB" id="129238at2157"/>
<dbReference type="Proteomes" id="UP000000663">
    <property type="component" value="Chromosome"/>
</dbReference>
<dbReference type="GO" id="GO:0005737">
    <property type="term" value="C:cytoplasm"/>
    <property type="evidence" value="ECO:0007669"/>
    <property type="project" value="UniProtKB-SubCell"/>
</dbReference>
<dbReference type="GO" id="GO:0000428">
    <property type="term" value="C:DNA-directed RNA polymerase complex"/>
    <property type="evidence" value="ECO:0007669"/>
    <property type="project" value="UniProtKB-KW"/>
</dbReference>
<dbReference type="GO" id="GO:0003677">
    <property type="term" value="F:DNA binding"/>
    <property type="evidence" value="ECO:0007669"/>
    <property type="project" value="InterPro"/>
</dbReference>
<dbReference type="GO" id="GO:0003899">
    <property type="term" value="F:DNA-directed RNA polymerase activity"/>
    <property type="evidence" value="ECO:0007669"/>
    <property type="project" value="UniProtKB-UniRule"/>
</dbReference>
<dbReference type="GO" id="GO:0008270">
    <property type="term" value="F:zinc ion binding"/>
    <property type="evidence" value="ECO:0007669"/>
    <property type="project" value="UniProtKB-UniRule"/>
</dbReference>
<dbReference type="GO" id="GO:0006351">
    <property type="term" value="P:DNA-templated transcription"/>
    <property type="evidence" value="ECO:0007669"/>
    <property type="project" value="UniProtKB-UniRule"/>
</dbReference>
<dbReference type="Gene3D" id="2.20.28.30">
    <property type="entry name" value="RNA polymerase ii, chain L"/>
    <property type="match status" value="1"/>
</dbReference>
<dbReference type="HAMAP" id="MF_00615">
    <property type="entry name" value="RNApol_arch_Rpo12"/>
    <property type="match status" value="1"/>
</dbReference>
<dbReference type="InterPro" id="IPR006591">
    <property type="entry name" value="RNAP_P/RPABC4"/>
</dbReference>
<dbReference type="InterPro" id="IPR029040">
    <property type="entry name" value="RPABC4/Spt4"/>
</dbReference>
<dbReference type="InterPro" id="IPR023464">
    <property type="entry name" value="Rpo12"/>
</dbReference>
<dbReference type="NCBIfam" id="NF001606">
    <property type="entry name" value="PRK00398.1-3"/>
    <property type="match status" value="1"/>
</dbReference>
<dbReference type="Pfam" id="PF03604">
    <property type="entry name" value="Zn_ribbon_RPAB4"/>
    <property type="match status" value="1"/>
</dbReference>
<dbReference type="SMART" id="SM00659">
    <property type="entry name" value="RPOLCX"/>
    <property type="match status" value="1"/>
</dbReference>
<dbReference type="SUPFAM" id="SSF63393">
    <property type="entry name" value="RNA polymerase subunits"/>
    <property type="match status" value="1"/>
</dbReference>
<comment type="function">
    <text evidence="1">DNA-dependent RNA polymerase (RNAP) catalyzes the transcription of DNA into RNA using the four ribonucleoside triphosphates as substrates.</text>
</comment>
<comment type="catalytic activity">
    <reaction evidence="1">
        <text>RNA(n) + a ribonucleoside 5'-triphosphate = RNA(n+1) + diphosphate</text>
        <dbReference type="Rhea" id="RHEA:21248"/>
        <dbReference type="Rhea" id="RHEA-COMP:14527"/>
        <dbReference type="Rhea" id="RHEA-COMP:17342"/>
        <dbReference type="ChEBI" id="CHEBI:33019"/>
        <dbReference type="ChEBI" id="CHEBI:61557"/>
        <dbReference type="ChEBI" id="CHEBI:140395"/>
        <dbReference type="EC" id="2.7.7.6"/>
    </reaction>
</comment>
<comment type="cofactor">
    <cofactor evidence="1">
        <name>Zn(2+)</name>
        <dbReference type="ChEBI" id="CHEBI:29105"/>
    </cofactor>
    <text evidence="1">Binds 1 zinc ion.</text>
</comment>
<comment type="subunit">
    <text evidence="1">Part of the RNA polymerase complex.</text>
</comment>
<comment type="subcellular location">
    <subcellularLocation>
        <location evidence="1">Cytoplasm</location>
    </subcellularLocation>
</comment>
<comment type="similarity">
    <text evidence="1">Belongs to the archaeal Rpo12/eukaryotic RPC10 RNA polymerase subunit family.</text>
</comment>
<keyword id="KW-0963">Cytoplasm</keyword>
<keyword id="KW-0240">DNA-directed RNA polymerase</keyword>
<keyword id="KW-0479">Metal-binding</keyword>
<keyword id="KW-0548">Nucleotidyltransferase</keyword>
<keyword id="KW-1185">Reference proteome</keyword>
<keyword id="KW-0804">Transcription</keyword>
<keyword id="KW-0808">Transferase</keyword>
<keyword id="KW-0862">Zinc</keyword>